<dbReference type="EC" id="4.2.-.-" evidence="3"/>
<dbReference type="EMBL" id="FRAX01000023">
    <property type="protein sequence ID" value="SHL73076.1"/>
    <property type="molecule type" value="Genomic_DNA"/>
</dbReference>
<dbReference type="RefSeq" id="WP_073287066.1">
    <property type="nucleotide sequence ID" value="NZ_FRAX01000023.1"/>
</dbReference>
<dbReference type="SMR" id="A0A1M7D0R2"/>
<dbReference type="STRING" id="1896212.SAMN05720765_12314"/>
<dbReference type="Proteomes" id="UP000183970">
    <property type="component" value="Unassembled WGS sequence"/>
</dbReference>
<dbReference type="GO" id="GO:0051539">
    <property type="term" value="F:4 iron, 4 sulfur cluster binding"/>
    <property type="evidence" value="ECO:0007669"/>
    <property type="project" value="UniProtKB-KW"/>
</dbReference>
<dbReference type="GO" id="GO:0016829">
    <property type="term" value="F:lyase activity"/>
    <property type="evidence" value="ECO:0007669"/>
    <property type="project" value="UniProtKB-KW"/>
</dbReference>
<dbReference type="GO" id="GO:0046872">
    <property type="term" value="F:metal ion binding"/>
    <property type="evidence" value="ECO:0007669"/>
    <property type="project" value="UniProtKB-KW"/>
</dbReference>
<dbReference type="GO" id="GO:0051607">
    <property type="term" value="P:defense response to virus"/>
    <property type="evidence" value="ECO:0007669"/>
    <property type="project" value="UniProtKB-KW"/>
</dbReference>
<dbReference type="CDD" id="cd01335">
    <property type="entry name" value="Radical_SAM"/>
    <property type="match status" value="1"/>
</dbReference>
<dbReference type="Gene3D" id="3.20.20.70">
    <property type="entry name" value="Aldolase class I"/>
    <property type="match status" value="1"/>
</dbReference>
<dbReference type="InterPro" id="IPR013785">
    <property type="entry name" value="Aldolase_TIM"/>
</dbReference>
<dbReference type="InterPro" id="IPR051196">
    <property type="entry name" value="RSAD2/Viperin_antiviral"/>
</dbReference>
<dbReference type="InterPro" id="IPR007197">
    <property type="entry name" value="rSAM"/>
</dbReference>
<dbReference type="NCBIfam" id="NF038283">
    <property type="entry name" value="viperin_w_prok"/>
    <property type="match status" value="1"/>
</dbReference>
<dbReference type="PANTHER" id="PTHR21339">
    <property type="entry name" value="RADICAL S-ADENOSYL METHIONINE DOMAIN-CONTAINING PROTEIN 2"/>
    <property type="match status" value="1"/>
</dbReference>
<dbReference type="PANTHER" id="PTHR21339:SF0">
    <property type="entry name" value="S-ADENOSYLMETHIONINE-DEPENDENT NUCLEOTIDE DEHYDRATASE RSAD2"/>
    <property type="match status" value="1"/>
</dbReference>
<dbReference type="Pfam" id="PF13353">
    <property type="entry name" value="Fer4_12"/>
    <property type="match status" value="1"/>
</dbReference>
<dbReference type="Pfam" id="PF04055">
    <property type="entry name" value="Radical_SAM"/>
    <property type="match status" value="1"/>
</dbReference>
<dbReference type="SFLD" id="SFLDS00029">
    <property type="entry name" value="Radical_SAM"/>
    <property type="match status" value="1"/>
</dbReference>
<dbReference type="SFLD" id="SFLDG01067">
    <property type="entry name" value="SPASM/twitch_domain_containing"/>
    <property type="match status" value="1"/>
</dbReference>
<dbReference type="SUPFAM" id="SSF102114">
    <property type="entry name" value="Radical SAM enzymes"/>
    <property type="match status" value="1"/>
</dbReference>
<dbReference type="PROSITE" id="PS51918">
    <property type="entry name" value="RADICAL_SAM"/>
    <property type="match status" value="1"/>
</dbReference>
<keyword id="KW-0004">4Fe-4S</keyword>
<keyword id="KW-0051">Antiviral defense</keyword>
<keyword id="KW-0408">Iron</keyword>
<keyword id="KW-0411">Iron-sulfur</keyword>
<keyword id="KW-0456">Lyase</keyword>
<keyword id="KW-0479">Metal-binding</keyword>
<keyword id="KW-0949">S-adenosyl-L-methionine</keyword>
<accession>A0A1M7D0R2</accession>
<evidence type="ECO:0000250" key="1">
    <source>
        <dbReference type="UniProtKB" id="P0DW53"/>
    </source>
</evidence>
<evidence type="ECO:0000255" key="2">
    <source>
        <dbReference type="PROSITE-ProRule" id="PRU01266"/>
    </source>
</evidence>
<evidence type="ECO:0000269" key="3">
    <source>
    </source>
</evidence>
<evidence type="ECO:0000303" key="4">
    <source>
    </source>
</evidence>
<evidence type="ECO:0000303" key="5">
    <source>
    </source>
</evidence>
<evidence type="ECO:0000305" key="6"/>
<evidence type="ECO:0000305" key="7">
    <source>
    </source>
</evidence>
<evidence type="ECO:0000312" key="8">
    <source>
        <dbReference type="EMBL" id="SHL73076.1"/>
    </source>
</evidence>
<organism>
    <name type="scientific">Fibrobacter sp. (strain UWH6)</name>
    <dbReference type="NCBI Taxonomy" id="1896212"/>
    <lineage>
        <taxon>Bacteria</taxon>
        <taxon>Pseudomonadati</taxon>
        <taxon>Fibrobacterota</taxon>
        <taxon>Fibrobacteria</taxon>
        <taxon>Fibrobacterales</taxon>
        <taxon>Fibrobacteraceae</taxon>
        <taxon>Fibrobacter</taxon>
    </lineage>
</organism>
<protein>
    <recommendedName>
        <fullName evidence="5">S-adenosylmethionine-dependent nucleotide dehydratase</fullName>
        <shortName evidence="5">SAND</shortName>
        <ecNumber evidence="3">4.2.-.-</ecNumber>
    </recommendedName>
    <alternativeName>
        <fullName evidence="4">Prokaryotic viperin protein pVip56</fullName>
        <shortName evidence="4">pVip56</shortName>
    </alternativeName>
</protein>
<gene>
    <name evidence="6" type="primary">vip56</name>
    <name type="ORF">Ga0136285_12314</name>
    <name evidence="8" type="ORF">SAMN05720765_12314</name>
</gene>
<name>SAND_FIBS6</name>
<sequence length="333" mass="39344">MNIKTIVINWHITESCNYKCKYCFAKWNRVKEIWTNPDNVRKILENLKSIRLEDCLFTQKRLNIVGGEPILQQERLWQVIKMAHEMDFEISIITNGSHLEYICPFVHLISQVGVSIDSFDHKTNVRIGRECNGKTISFQQLKEKLEELRTLNPGLNIKINTVVNEYNFNEILVDRMAELKIDKWKILRQLPFDGKEGISDFKFNTFLFNNLKEEKMPKKDPLSNFLAAFSAPQKQNNVIFVEDNDVMTESYLMIAPDGRLFQNGHKEYEYSHPLTEISIDEALEEINFDQEKFNNRYENYATEEAKYRMEEFFLMNEYEDVSFDCCCPFGDKD</sequence>
<comment type="function">
    <text evidence="1 3 7">Expression of pVip56 in E.coli (strain MG1655) confers resistance to phage P1; has no effect against T7. Catalyzes the conversion of guanosine triphosphate (GTP) to 3'-deoxy-3',4'-didehydro-GTP (ddhGTP), probably via a SAM-dependent radical mechanism (PubMed:32937646). The modified nucleotide represses transcription from T7 RNA polymerase-directed genes (possibly by acting as chain terminators), strongly suggesting these nucleotides block viral polymerase transcription (By similarity). How this protein allows bacteria to resist viruses that do not encode their own RNA polymerase (such as lambda, P1) is unknown (Probable).</text>
</comment>
<comment type="catalytic activity">
    <reaction evidence="3">
        <text>GTP + AH2 + S-adenosyl-L-methionine = 3'-deoxy-3',4'-didehydro-GTP + 5'-deoxyadenosine + L-methionine + A + H2O + H(+)</text>
        <dbReference type="Rhea" id="RHEA:72143"/>
        <dbReference type="ChEBI" id="CHEBI:13193"/>
        <dbReference type="ChEBI" id="CHEBI:15377"/>
        <dbReference type="ChEBI" id="CHEBI:15378"/>
        <dbReference type="ChEBI" id="CHEBI:17319"/>
        <dbReference type="ChEBI" id="CHEBI:17499"/>
        <dbReference type="ChEBI" id="CHEBI:37565"/>
        <dbReference type="ChEBI" id="CHEBI:57844"/>
        <dbReference type="ChEBI" id="CHEBI:59789"/>
        <dbReference type="ChEBI" id="CHEBI:191857"/>
    </reaction>
    <physiologicalReaction direction="left-to-right" evidence="3">
        <dbReference type="Rhea" id="RHEA:72144"/>
    </physiologicalReaction>
</comment>
<comment type="cofactor">
    <cofactor evidence="2">
        <name>[4Fe-4S] cluster</name>
        <dbReference type="ChEBI" id="CHEBI:49883"/>
    </cofactor>
</comment>
<comment type="similarity">
    <text evidence="7">Belongs to the radical SAM superfamily. Viperin family.</text>
</comment>
<reference evidence="8" key="1">
    <citation type="submission" date="2016-11" db="EMBL/GenBank/DDBJ databases">
        <authorList>
            <person name="Jaros S."/>
            <person name="Januszkiewicz K."/>
            <person name="Wedrychowicz H."/>
        </authorList>
    </citation>
    <scope>NUCLEOTIDE SEQUENCE [LARGE SCALE GENOMIC DNA]</scope>
    <source>
        <strain>UWH6</strain>
    </source>
</reference>
<reference key="2">
    <citation type="journal article" date="2021" name="Nature">
        <title>Prokaryotic viperins produce diverse antiviral molecules.</title>
        <authorList>
            <person name="Bernheim A."/>
            <person name="Millman A."/>
            <person name="Ofir G."/>
            <person name="Meitav G."/>
            <person name="Avraham C."/>
            <person name="Shomar H."/>
            <person name="Rosenberg M.M."/>
            <person name="Tal N."/>
            <person name="Melamed S."/>
            <person name="Amitai G."/>
            <person name="Sorek R."/>
        </authorList>
    </citation>
    <scope>FUNCTION IN ANTIVIRAL DEFENSE</scope>
    <scope>FUNCTION IN DDHGTP SYNTHESIS</scope>
    <scope>CATALYTIC ACTIVITY</scope>
    <source>
        <strain>UWH6</strain>
    </source>
</reference>
<reference key="3">
    <citation type="journal article" date="2022" name="Front. Mol. Biosci.">
        <title>Radical-SAM dependent nucleotide dehydratase (SAND), rectification of the names of an ancient iron-sulfur enzyme using NC-IUBMB recommendations.</title>
        <authorList>
            <person name="Ji Y."/>
            <person name="Wei L."/>
            <person name="Da A."/>
            <person name="Stark H."/>
            <person name="Hagedoorn P.-L."/>
            <person name="Ciofi-Baffoni S."/>
            <person name="Cowley S.A."/>
            <person name="Louro R.O."/>
            <person name="Todorovic S."/>
            <person name="Mroginski M.A."/>
            <person name="Nicolet Y."/>
            <person name="Roessler M.M."/>
            <person name="Le Brun N.E."/>
            <person name="Piccioli M."/>
            <person name="James W.S."/>
            <person name="Hagen W.R."/>
            <person name="Ebrahimi K.H."/>
        </authorList>
    </citation>
    <scope>NOMENCLATURE</scope>
</reference>
<proteinExistence type="evidence at protein level"/>
<feature type="chain" id="PRO_0000456423" description="S-adenosylmethionine-dependent nucleotide dehydratase">
    <location>
        <begin position="1"/>
        <end position="333"/>
    </location>
</feature>
<feature type="domain" description="Radical SAM core" evidence="2">
    <location>
        <begin position="1"/>
        <end position="239"/>
    </location>
</feature>
<feature type="binding site" evidence="2">
    <location>
        <position position="16"/>
    </location>
    <ligand>
        <name>[4Fe-4S] cluster</name>
        <dbReference type="ChEBI" id="CHEBI:49883"/>
        <note>4Fe-4S-S-AdoMet</note>
    </ligand>
</feature>
<feature type="binding site" evidence="2">
    <location>
        <position position="20"/>
    </location>
    <ligand>
        <name>[4Fe-4S] cluster</name>
        <dbReference type="ChEBI" id="CHEBI:49883"/>
        <note>4Fe-4S-S-AdoMet</note>
    </ligand>
</feature>
<feature type="binding site" evidence="2">
    <location>
        <position position="23"/>
    </location>
    <ligand>
        <name>[4Fe-4S] cluster</name>
        <dbReference type="ChEBI" id="CHEBI:49883"/>
        <note>4Fe-4S-S-AdoMet</note>
    </ligand>
</feature>